<organism>
    <name type="scientific">Xanthomonas oryzae pv. oryzae (strain PXO99A)</name>
    <dbReference type="NCBI Taxonomy" id="360094"/>
    <lineage>
        <taxon>Bacteria</taxon>
        <taxon>Pseudomonadati</taxon>
        <taxon>Pseudomonadota</taxon>
        <taxon>Gammaproteobacteria</taxon>
        <taxon>Lysobacterales</taxon>
        <taxon>Lysobacteraceae</taxon>
        <taxon>Xanthomonas</taxon>
    </lineage>
</organism>
<protein>
    <recommendedName>
        <fullName evidence="1">Probable transcriptional regulatory protein PXO_01555</fullName>
    </recommendedName>
</protein>
<name>Y1555_XANOP</name>
<feature type="chain" id="PRO_1000132257" description="Probable transcriptional regulatory protein PXO_01555">
    <location>
        <begin position="1"/>
        <end position="242"/>
    </location>
</feature>
<proteinExistence type="inferred from homology"/>
<reference key="1">
    <citation type="journal article" date="2008" name="BMC Genomics">
        <title>Genome sequence and rapid evolution of the rice pathogen Xanthomonas oryzae pv. oryzae PXO99A.</title>
        <authorList>
            <person name="Salzberg S.L."/>
            <person name="Sommer D.D."/>
            <person name="Schatz M.C."/>
            <person name="Phillippy A.M."/>
            <person name="Rabinowicz P.D."/>
            <person name="Tsuge S."/>
            <person name="Furutani A."/>
            <person name="Ochiai H."/>
            <person name="Delcher A.L."/>
            <person name="Kelley D."/>
            <person name="Madupu R."/>
            <person name="Puiu D."/>
            <person name="Radune D."/>
            <person name="Shumway M."/>
            <person name="Trapnell C."/>
            <person name="Aparna G."/>
            <person name="Jha G."/>
            <person name="Pandey A."/>
            <person name="Patil P.B."/>
            <person name="Ishihara H."/>
            <person name="Meyer D.F."/>
            <person name="Szurek B."/>
            <person name="Verdier V."/>
            <person name="Koebnik R."/>
            <person name="Dow J.M."/>
            <person name="Ryan R.P."/>
            <person name="Hirata H."/>
            <person name="Tsuyumu S."/>
            <person name="Won Lee S."/>
            <person name="Seo Y.-S."/>
            <person name="Sriariyanum M."/>
            <person name="Ronald P.C."/>
            <person name="Sonti R.V."/>
            <person name="Van Sluys M.-A."/>
            <person name="Leach J.E."/>
            <person name="White F.F."/>
            <person name="Bogdanove A.J."/>
        </authorList>
    </citation>
    <scope>NUCLEOTIDE SEQUENCE [LARGE SCALE GENOMIC DNA]</scope>
    <source>
        <strain>PXO99A</strain>
    </source>
</reference>
<keyword id="KW-0963">Cytoplasm</keyword>
<keyword id="KW-0238">DNA-binding</keyword>
<keyword id="KW-0804">Transcription</keyword>
<keyword id="KW-0805">Transcription regulation</keyword>
<sequence length="242" mass="25582">MGRGPSIEGRKNASDAKRGKMFTKIIREISVAARAGGGDPSNNPRLRTAMDKGLSANMSKDVIERAIKKSTGELEGVEYEEVRYEGYAPGGVAVIVDCLTDNRVRTVADVRHAFSKCGGNMGTEGSVAFMFKRLGVLSFAAGIDEDTLTDAAIDAGADDVVVYPEDGAIDVLTAPDAFAQVRDALAAAGLEPAHAEIAFRADNDIVVDGDTAVQVRKLLDMLEDLDDVQDVYSNVDQAALGA</sequence>
<dbReference type="EMBL" id="CP000967">
    <property type="protein sequence ID" value="ACD59834.1"/>
    <property type="molecule type" value="Genomic_DNA"/>
</dbReference>
<dbReference type="RefSeq" id="WP_012445355.1">
    <property type="nucleotide sequence ID" value="NC_010717.2"/>
</dbReference>
<dbReference type="SMR" id="B2STK4"/>
<dbReference type="KEGG" id="xop:PXO_01555"/>
<dbReference type="eggNOG" id="COG0217">
    <property type="taxonomic scope" value="Bacteria"/>
</dbReference>
<dbReference type="HOGENOM" id="CLU_062974_2_2_6"/>
<dbReference type="Proteomes" id="UP000001740">
    <property type="component" value="Chromosome"/>
</dbReference>
<dbReference type="GO" id="GO:0005829">
    <property type="term" value="C:cytosol"/>
    <property type="evidence" value="ECO:0007669"/>
    <property type="project" value="TreeGrafter"/>
</dbReference>
<dbReference type="GO" id="GO:0003677">
    <property type="term" value="F:DNA binding"/>
    <property type="evidence" value="ECO:0007669"/>
    <property type="project" value="UniProtKB-UniRule"/>
</dbReference>
<dbReference type="GO" id="GO:0006355">
    <property type="term" value="P:regulation of DNA-templated transcription"/>
    <property type="evidence" value="ECO:0007669"/>
    <property type="project" value="UniProtKB-UniRule"/>
</dbReference>
<dbReference type="FunFam" id="1.10.10.200:FF:000007">
    <property type="entry name" value="Probable transcriptional regulatory protein AC801_15750"/>
    <property type="match status" value="1"/>
</dbReference>
<dbReference type="FunFam" id="3.30.70.980:FF:000002">
    <property type="entry name" value="Probable transcriptional regulatory protein YebC"/>
    <property type="match status" value="1"/>
</dbReference>
<dbReference type="Gene3D" id="1.10.10.200">
    <property type="match status" value="1"/>
</dbReference>
<dbReference type="Gene3D" id="3.30.70.980">
    <property type="match status" value="2"/>
</dbReference>
<dbReference type="HAMAP" id="MF_00693">
    <property type="entry name" value="Transcrip_reg_TACO1"/>
    <property type="match status" value="1"/>
</dbReference>
<dbReference type="InterPro" id="IPR017856">
    <property type="entry name" value="Integrase-like_N"/>
</dbReference>
<dbReference type="InterPro" id="IPR048300">
    <property type="entry name" value="TACO1_YebC-like_2nd/3rd_dom"/>
</dbReference>
<dbReference type="InterPro" id="IPR049083">
    <property type="entry name" value="TACO1_YebC_N"/>
</dbReference>
<dbReference type="InterPro" id="IPR002876">
    <property type="entry name" value="Transcrip_reg_TACO1-like"/>
</dbReference>
<dbReference type="InterPro" id="IPR026564">
    <property type="entry name" value="Transcrip_reg_TACO1-like_dom3"/>
</dbReference>
<dbReference type="InterPro" id="IPR029072">
    <property type="entry name" value="YebC-like"/>
</dbReference>
<dbReference type="NCBIfam" id="NF001030">
    <property type="entry name" value="PRK00110.1"/>
    <property type="match status" value="1"/>
</dbReference>
<dbReference type="NCBIfam" id="NF009044">
    <property type="entry name" value="PRK12378.1"/>
    <property type="match status" value="1"/>
</dbReference>
<dbReference type="NCBIfam" id="TIGR01033">
    <property type="entry name" value="YebC/PmpR family DNA-binding transcriptional regulator"/>
    <property type="match status" value="1"/>
</dbReference>
<dbReference type="PANTHER" id="PTHR12532:SF6">
    <property type="entry name" value="TRANSCRIPTIONAL REGULATORY PROTEIN YEBC-RELATED"/>
    <property type="match status" value="1"/>
</dbReference>
<dbReference type="PANTHER" id="PTHR12532">
    <property type="entry name" value="TRANSLATIONAL ACTIVATOR OF CYTOCHROME C OXIDASE 1"/>
    <property type="match status" value="1"/>
</dbReference>
<dbReference type="Pfam" id="PF20772">
    <property type="entry name" value="TACO1_YebC_N"/>
    <property type="match status" value="1"/>
</dbReference>
<dbReference type="Pfam" id="PF01709">
    <property type="entry name" value="Transcrip_reg"/>
    <property type="match status" value="1"/>
</dbReference>
<dbReference type="SUPFAM" id="SSF75625">
    <property type="entry name" value="YebC-like"/>
    <property type="match status" value="1"/>
</dbReference>
<gene>
    <name type="ordered locus">PXO_01555</name>
</gene>
<comment type="subcellular location">
    <subcellularLocation>
        <location evidence="1">Cytoplasm</location>
    </subcellularLocation>
</comment>
<comment type="similarity">
    <text evidence="1">Belongs to the TACO1 family.</text>
</comment>
<accession>B2STK4</accession>
<evidence type="ECO:0000255" key="1">
    <source>
        <dbReference type="HAMAP-Rule" id="MF_00693"/>
    </source>
</evidence>